<dbReference type="EC" id="2.4.99.16" evidence="1"/>
<dbReference type="EMBL" id="CP001515">
    <property type="protein sequence ID" value="ACS46805.1"/>
    <property type="molecule type" value="Genomic_DNA"/>
</dbReference>
<dbReference type="RefSeq" id="WP_004219141.1">
    <property type="nucleotide sequence ID" value="NC_012814.1"/>
</dbReference>
<dbReference type="SMR" id="C6A9K7"/>
<dbReference type="CAZy" id="GH13">
    <property type="family name" value="Glycoside Hydrolase Family 13"/>
</dbReference>
<dbReference type="KEGG" id="blc:Balac_1458"/>
<dbReference type="PATRIC" id="fig|442563.4.peg.682"/>
<dbReference type="HOGENOM" id="CLU_015798_0_0_11"/>
<dbReference type="GO" id="GO:0016758">
    <property type="term" value="F:hexosyltransferase activity"/>
    <property type="evidence" value="ECO:0007669"/>
    <property type="project" value="UniProtKB-UniRule"/>
</dbReference>
<dbReference type="GO" id="GO:0004553">
    <property type="term" value="F:hydrolase activity, hydrolyzing O-glycosyl compounds"/>
    <property type="evidence" value="ECO:0007669"/>
    <property type="project" value="InterPro"/>
</dbReference>
<dbReference type="GO" id="GO:0030979">
    <property type="term" value="P:alpha-glucan biosynthetic process"/>
    <property type="evidence" value="ECO:0007669"/>
    <property type="project" value="UniProtKB-UniRule"/>
</dbReference>
<dbReference type="Gene3D" id="3.20.20.80">
    <property type="entry name" value="Glycosidases"/>
    <property type="match status" value="1"/>
</dbReference>
<dbReference type="Gene3D" id="2.60.40.1180">
    <property type="entry name" value="Golgi alpha-mannosidase II"/>
    <property type="match status" value="1"/>
</dbReference>
<dbReference type="Gene3D" id="2.60.40.10">
    <property type="entry name" value="Immunoglobulins"/>
    <property type="match status" value="1"/>
</dbReference>
<dbReference type="Gene3D" id="1.20.58.80">
    <property type="entry name" value="Phosphotransferase system, lactose/cellobiose-type IIA subunit"/>
    <property type="match status" value="1"/>
</dbReference>
<dbReference type="HAMAP" id="MF_02124">
    <property type="entry name" value="GlgE"/>
    <property type="match status" value="1"/>
</dbReference>
<dbReference type="InterPro" id="IPR026585">
    <property type="entry name" value="GlgE"/>
</dbReference>
<dbReference type="InterPro" id="IPR049171">
    <property type="entry name" value="GLGE_C"/>
</dbReference>
<dbReference type="InterPro" id="IPR021828">
    <property type="entry name" value="GlgE_dom_N/S"/>
</dbReference>
<dbReference type="InterPro" id="IPR006047">
    <property type="entry name" value="Glyco_hydro_13_cat_dom"/>
</dbReference>
<dbReference type="InterPro" id="IPR013780">
    <property type="entry name" value="Glyco_hydro_b"/>
</dbReference>
<dbReference type="InterPro" id="IPR017853">
    <property type="entry name" value="Glycoside_hydrolase_SF"/>
</dbReference>
<dbReference type="InterPro" id="IPR013783">
    <property type="entry name" value="Ig-like_fold"/>
</dbReference>
<dbReference type="PANTHER" id="PTHR47786">
    <property type="entry name" value="ALPHA-1,4-GLUCAN:MALTOSE-1-PHOSPHATE MALTOSYLTRANSFERASE"/>
    <property type="match status" value="1"/>
</dbReference>
<dbReference type="PANTHER" id="PTHR47786:SF2">
    <property type="entry name" value="GLYCOSYL HYDROLASE FAMILY 13 CATALYTIC DOMAIN-CONTAINING PROTEIN"/>
    <property type="match status" value="1"/>
</dbReference>
<dbReference type="Pfam" id="PF21702">
    <property type="entry name" value="GLGE_C"/>
    <property type="match status" value="1"/>
</dbReference>
<dbReference type="Pfam" id="PF11896">
    <property type="entry name" value="GlgE_dom_N_S"/>
    <property type="match status" value="1"/>
</dbReference>
<dbReference type="SMART" id="SM00642">
    <property type="entry name" value="Aamy"/>
    <property type="match status" value="1"/>
</dbReference>
<dbReference type="SUPFAM" id="SSF51445">
    <property type="entry name" value="(Trans)glycosidases"/>
    <property type="match status" value="1"/>
</dbReference>
<protein>
    <recommendedName>
        <fullName evidence="1">Alpha-1,4-glucan:maltose-1-phosphate maltosyltransferase</fullName>
        <shortName evidence="1">GMPMT</shortName>
        <ecNumber evidence="1">2.4.99.16</ecNumber>
    </recommendedName>
    <alternativeName>
        <fullName evidence="1">(1-&gt;4)-alpha-D-glucan:maltose-1-phosphate alpha-D-maltosyltransferase</fullName>
    </alternativeName>
</protein>
<organism>
    <name type="scientific">Bifidobacterium animalis subsp. lactis (strain Bl-04 / DGCC2908 / RB 4825 / SD5219)</name>
    <dbReference type="NCBI Taxonomy" id="580050"/>
    <lineage>
        <taxon>Bacteria</taxon>
        <taxon>Bacillati</taxon>
        <taxon>Actinomycetota</taxon>
        <taxon>Actinomycetes</taxon>
        <taxon>Bifidobacteriales</taxon>
        <taxon>Bifidobacteriaceae</taxon>
        <taxon>Bifidobacterium</taxon>
    </lineage>
</organism>
<sequence length="731" mass="81693">MEAQHNETEAAGKPAAKKTTRTRKPRASKQATFIAEAPAMPIAIKEPGQFGRVNILNCQPSVEDDVYAARVEIGEQFTVSAQVFMEGRTKVGATAVLKNPRGRIMARVPMTVENAGLDLYTAKLQAGEHSTLNPWDAEFAEVKKQLGNWRVAIEGWEDTYGAWLHDARIKVDVLSDVENTLTSGSELLTRWASTRDANLNAEQRKTLREAAKSMMDTSLDAKSRLTFADNADIEALHETNPLRDGLTSSGDHVFHVERPKSSFSAWYQFFPRSEGAYLDDNGKKVQGNFHTAVSGLERAKAEGFNIVYLPPIFPIGVTNRKGPDGALNAGPDDPGSPFGIGSELGGHDTVDPLLGTMDDFKAFCQRAHELNLEVALDFALQCSPDHPWVKEHPNWFRTKPDGSIAYAENPPKKYQDIYPIDFDNDLEGIEREVERIMNLWIDAGVTIFRVDNPHTKPVRFWQDVIAAVTKKHPEVLFLAEAFTRPAMVRALSYAGFTQSHCYFPWRNTKPQLEEFLQETNGKGGYYQHNTFWPTTPDILTAYVRDGGVAAHAIRAVLAALGSPSWGIYNGYELIENRQRADAEEQSSNEKFEIKVRDWSAANRIGISKLLTSLNEIRSKHAATTSYHNLTILPSANENIIAFARQTEGRFTKDGRTDTLIVVVNLDPYNEQQSSIHVDAKALGLPTEHPYRVKDQLTGREYDWSWDNFVSLAPWADVAHVFHVETGEQPLD</sequence>
<name>GLGE_BIFLB</name>
<feature type="chain" id="PRO_0000413891" description="Alpha-1,4-glucan:maltose-1-phosphate maltosyltransferase">
    <location>
        <begin position="1"/>
        <end position="731"/>
    </location>
</feature>
<feature type="region of interest" description="Disordered" evidence="2">
    <location>
        <begin position="1"/>
        <end position="31"/>
    </location>
</feature>
<feature type="compositionally biased region" description="Basic and acidic residues" evidence="2">
    <location>
        <begin position="1"/>
        <end position="10"/>
    </location>
</feature>
<feature type="compositionally biased region" description="Basic residues" evidence="2">
    <location>
        <begin position="15"/>
        <end position="27"/>
    </location>
</feature>
<feature type="active site" description="Nucleophile" evidence="1">
    <location>
        <position position="451"/>
    </location>
</feature>
<feature type="active site" description="Proton donor" evidence="1">
    <location>
        <position position="480"/>
    </location>
</feature>
<feature type="binding site" evidence="1">
    <location>
        <position position="321"/>
    </location>
    <ligand>
        <name>alpha-maltose 1-phosphate</name>
        <dbReference type="ChEBI" id="CHEBI:63576"/>
    </ligand>
</feature>
<feature type="binding site" evidence="1">
    <location>
        <position position="381"/>
    </location>
    <ligand>
        <name>alpha-maltose 1-phosphate</name>
        <dbReference type="ChEBI" id="CHEBI:63576"/>
    </ligand>
</feature>
<feature type="binding site" evidence="1">
    <location>
        <position position="416"/>
    </location>
    <ligand>
        <name>alpha-maltose 1-phosphate</name>
        <dbReference type="ChEBI" id="CHEBI:63576"/>
    </ligand>
</feature>
<feature type="binding site" evidence="1">
    <location>
        <position position="452"/>
    </location>
    <ligand>
        <name>alpha-maltose 1-phosphate</name>
        <dbReference type="ChEBI" id="CHEBI:63576"/>
    </ligand>
</feature>
<feature type="binding site" evidence="1">
    <location>
        <begin position="590"/>
        <end position="591"/>
    </location>
    <ligand>
        <name>alpha-maltose 1-phosphate</name>
        <dbReference type="ChEBI" id="CHEBI:63576"/>
    </ligand>
</feature>
<feature type="site" description="Transition state stabilizer" evidence="1">
    <location>
        <position position="537"/>
    </location>
</feature>
<proteinExistence type="inferred from homology"/>
<reference key="1">
    <citation type="journal article" date="2009" name="J. Bacteriol.">
        <title>Comparison of the complete genome sequences of Bifidobacterium animalis subsp. lactis DSM 10140 and Bl-04.</title>
        <authorList>
            <person name="Barrangou R."/>
            <person name="Briczinski E.P."/>
            <person name="Traeger L.L."/>
            <person name="Loquasto J.R."/>
            <person name="Richards M."/>
            <person name="Horvath P."/>
            <person name="Coute-Monvoisin A.-C."/>
            <person name="Leyer G."/>
            <person name="Rendulic S."/>
            <person name="Steele J.L."/>
            <person name="Broadbent J.R."/>
            <person name="Oberg T."/>
            <person name="Dudley E.G."/>
            <person name="Schuster S."/>
            <person name="Romero D.A."/>
            <person name="Roberts R.F."/>
        </authorList>
    </citation>
    <scope>NUCLEOTIDE SEQUENCE [LARGE SCALE GENOMIC DNA]</scope>
    <source>
        <strain>Bl-04 / DGCC2908 / RB 4825 / SD5219</strain>
    </source>
</reference>
<accession>C6A9K7</accession>
<comment type="function">
    <text evidence="1">Maltosyltransferase that uses maltose 1-phosphate (M1P) as the sugar donor to elongate linear or branched alpha-(1-&gt;4)-glucans. Is involved in a branched alpha-glucan biosynthetic pathway from trehalose, together with TreS, Mak and GlgB.</text>
</comment>
<comment type="catalytic activity">
    <reaction evidence="1">
        <text>alpha-maltose 1-phosphate + [(1-&gt;4)-alpha-D-glucosyl](n) = [(1-&gt;4)-alpha-D-glucosyl](n+2) + phosphate</text>
        <dbReference type="Rhea" id="RHEA:42692"/>
        <dbReference type="Rhea" id="RHEA-COMP:9584"/>
        <dbReference type="Rhea" id="RHEA-COMP:10183"/>
        <dbReference type="ChEBI" id="CHEBI:15444"/>
        <dbReference type="ChEBI" id="CHEBI:43474"/>
        <dbReference type="ChEBI" id="CHEBI:63576"/>
        <dbReference type="EC" id="2.4.99.16"/>
    </reaction>
</comment>
<comment type="subunit">
    <text evidence="1">Homodimer.</text>
</comment>
<comment type="similarity">
    <text evidence="1">Belongs to the glycosyl hydrolase 13 family. GlgE subfamily.</text>
</comment>
<gene>
    <name evidence="1" type="primary">glgE</name>
    <name type="ordered locus">Balac_1458</name>
</gene>
<keyword id="KW-0119">Carbohydrate metabolism</keyword>
<keyword id="KW-0328">Glycosyltransferase</keyword>
<keyword id="KW-0808">Transferase</keyword>
<evidence type="ECO:0000255" key="1">
    <source>
        <dbReference type="HAMAP-Rule" id="MF_02124"/>
    </source>
</evidence>
<evidence type="ECO:0000256" key="2">
    <source>
        <dbReference type="SAM" id="MobiDB-lite"/>
    </source>
</evidence>